<keyword id="KW-0963">Cytoplasm</keyword>
<keyword id="KW-0269">Exonuclease</keyword>
<keyword id="KW-0378">Hydrolase</keyword>
<keyword id="KW-0540">Nuclease</keyword>
<keyword id="KW-1185">Reference proteome</keyword>
<sequence length="181" mass="20703">MTVSAQNLVWIDMEMTGLDPEQNVVLEIATIVTDKDLNVLAEGPVIAIHQSDEELAKMDDWNVNTHTNSGLVARVKASQHDEAQAVAETLDFIRQWVPERTSPLCGNSIGQDRRFMVKHMSDLEAFFHYRNVDVSTIKELVRRWQPALLDQFKKSGTHQALDDIRESIAELQFYRSHVFKI</sequence>
<evidence type="ECO:0000255" key="1">
    <source>
        <dbReference type="HAMAP-Rule" id="MF_00045"/>
    </source>
</evidence>
<proteinExistence type="inferred from homology"/>
<organism>
    <name type="scientific">Aeromonas hydrophila subsp. hydrophila (strain ATCC 7966 / DSM 30187 / BCRC 13018 / CCUG 14551 / JCM 1027 / KCTC 2358 / NCIMB 9240 / NCTC 8049)</name>
    <dbReference type="NCBI Taxonomy" id="380703"/>
    <lineage>
        <taxon>Bacteria</taxon>
        <taxon>Pseudomonadati</taxon>
        <taxon>Pseudomonadota</taxon>
        <taxon>Gammaproteobacteria</taxon>
        <taxon>Aeromonadales</taxon>
        <taxon>Aeromonadaceae</taxon>
        <taxon>Aeromonas</taxon>
    </lineage>
</organism>
<protein>
    <recommendedName>
        <fullName evidence="1">Oligoribonuclease</fullName>
        <ecNumber evidence="1">3.1.15.-</ecNumber>
    </recommendedName>
</protein>
<reference key="1">
    <citation type="journal article" date="2006" name="J. Bacteriol.">
        <title>Genome sequence of Aeromonas hydrophila ATCC 7966T: jack of all trades.</title>
        <authorList>
            <person name="Seshadri R."/>
            <person name="Joseph S.W."/>
            <person name="Chopra A.K."/>
            <person name="Sha J."/>
            <person name="Shaw J."/>
            <person name="Graf J."/>
            <person name="Haft D.H."/>
            <person name="Wu M."/>
            <person name="Ren Q."/>
            <person name="Rosovitz M.J."/>
            <person name="Madupu R."/>
            <person name="Tallon L."/>
            <person name="Kim M."/>
            <person name="Jin S."/>
            <person name="Vuong H."/>
            <person name="Stine O.C."/>
            <person name="Ali A."/>
            <person name="Horneman A.J."/>
            <person name="Heidelberg J.F."/>
        </authorList>
    </citation>
    <scope>NUCLEOTIDE SEQUENCE [LARGE SCALE GENOMIC DNA]</scope>
    <source>
        <strain>ATCC 7966 / DSM 30187 / BCRC 13018 / CCUG 14551 / JCM 1027 / KCTC 2358 / NCIMB 9240 / NCTC 8049</strain>
    </source>
</reference>
<comment type="function">
    <text evidence="1">3'-to-5' exoribonuclease specific for small oligoribonucleotides.</text>
</comment>
<comment type="subcellular location">
    <subcellularLocation>
        <location evidence="1">Cytoplasm</location>
    </subcellularLocation>
</comment>
<comment type="similarity">
    <text evidence="1">Belongs to the oligoribonuclease family.</text>
</comment>
<feature type="chain" id="PRO_1000004226" description="Oligoribonuclease">
    <location>
        <begin position="1"/>
        <end position="181"/>
    </location>
</feature>
<feature type="domain" description="Exonuclease" evidence="1">
    <location>
        <begin position="8"/>
        <end position="171"/>
    </location>
</feature>
<feature type="active site" evidence="1">
    <location>
        <position position="129"/>
    </location>
</feature>
<dbReference type="EC" id="3.1.15.-" evidence="1"/>
<dbReference type="EMBL" id="CP000462">
    <property type="protein sequence ID" value="ABK39727.1"/>
    <property type="molecule type" value="Genomic_DNA"/>
</dbReference>
<dbReference type="RefSeq" id="WP_011707210.1">
    <property type="nucleotide sequence ID" value="NC_008570.1"/>
</dbReference>
<dbReference type="RefSeq" id="YP_857935.1">
    <property type="nucleotide sequence ID" value="NC_008570.1"/>
</dbReference>
<dbReference type="SMR" id="A0KNT4"/>
<dbReference type="STRING" id="380703.AHA_3459"/>
<dbReference type="EnsemblBacteria" id="ABK39727">
    <property type="protein sequence ID" value="ABK39727"/>
    <property type="gene ID" value="AHA_3459"/>
</dbReference>
<dbReference type="GeneID" id="4488232"/>
<dbReference type="KEGG" id="aha:AHA_3459"/>
<dbReference type="PATRIC" id="fig|380703.7.peg.3449"/>
<dbReference type="eggNOG" id="COG1949">
    <property type="taxonomic scope" value="Bacteria"/>
</dbReference>
<dbReference type="HOGENOM" id="CLU_064761_2_0_6"/>
<dbReference type="OrthoDB" id="9801329at2"/>
<dbReference type="Proteomes" id="UP000000756">
    <property type="component" value="Chromosome"/>
</dbReference>
<dbReference type="GO" id="GO:0005737">
    <property type="term" value="C:cytoplasm"/>
    <property type="evidence" value="ECO:0007669"/>
    <property type="project" value="UniProtKB-SubCell"/>
</dbReference>
<dbReference type="GO" id="GO:0000175">
    <property type="term" value="F:3'-5'-RNA exonuclease activity"/>
    <property type="evidence" value="ECO:0007669"/>
    <property type="project" value="InterPro"/>
</dbReference>
<dbReference type="GO" id="GO:0003676">
    <property type="term" value="F:nucleic acid binding"/>
    <property type="evidence" value="ECO:0007669"/>
    <property type="project" value="InterPro"/>
</dbReference>
<dbReference type="GO" id="GO:0006259">
    <property type="term" value="P:DNA metabolic process"/>
    <property type="evidence" value="ECO:0007669"/>
    <property type="project" value="UniProtKB-ARBA"/>
</dbReference>
<dbReference type="CDD" id="cd06135">
    <property type="entry name" value="Orn"/>
    <property type="match status" value="1"/>
</dbReference>
<dbReference type="FunFam" id="3.30.420.10:FF:000003">
    <property type="entry name" value="Oligoribonuclease"/>
    <property type="match status" value="1"/>
</dbReference>
<dbReference type="Gene3D" id="3.30.420.10">
    <property type="entry name" value="Ribonuclease H-like superfamily/Ribonuclease H"/>
    <property type="match status" value="1"/>
</dbReference>
<dbReference type="HAMAP" id="MF_00045">
    <property type="entry name" value="Oligoribonuclease"/>
    <property type="match status" value="1"/>
</dbReference>
<dbReference type="InterPro" id="IPR013520">
    <property type="entry name" value="Exonuclease_RNaseT/DNA_pol3"/>
</dbReference>
<dbReference type="InterPro" id="IPR022894">
    <property type="entry name" value="Oligoribonuclease"/>
</dbReference>
<dbReference type="InterPro" id="IPR012337">
    <property type="entry name" value="RNaseH-like_sf"/>
</dbReference>
<dbReference type="InterPro" id="IPR036397">
    <property type="entry name" value="RNaseH_sf"/>
</dbReference>
<dbReference type="NCBIfam" id="NF003765">
    <property type="entry name" value="PRK05359.1"/>
    <property type="match status" value="1"/>
</dbReference>
<dbReference type="PANTHER" id="PTHR11046">
    <property type="entry name" value="OLIGORIBONUCLEASE, MITOCHONDRIAL"/>
    <property type="match status" value="1"/>
</dbReference>
<dbReference type="PANTHER" id="PTHR11046:SF0">
    <property type="entry name" value="OLIGORIBONUCLEASE, MITOCHONDRIAL"/>
    <property type="match status" value="1"/>
</dbReference>
<dbReference type="Pfam" id="PF00929">
    <property type="entry name" value="RNase_T"/>
    <property type="match status" value="1"/>
</dbReference>
<dbReference type="SMART" id="SM00479">
    <property type="entry name" value="EXOIII"/>
    <property type="match status" value="1"/>
</dbReference>
<dbReference type="SUPFAM" id="SSF53098">
    <property type="entry name" value="Ribonuclease H-like"/>
    <property type="match status" value="1"/>
</dbReference>
<accession>A0KNT4</accession>
<gene>
    <name evidence="1" type="primary">orn</name>
    <name type="ordered locus">AHA_3459</name>
</gene>
<name>ORN_AERHH</name>